<organism>
    <name type="scientific">Picosynechococcus sp. (strain ATCC 27264 / PCC 7002 / PR-6)</name>
    <name type="common">Agmenellum quadruplicatum</name>
    <dbReference type="NCBI Taxonomy" id="32049"/>
    <lineage>
        <taxon>Bacteria</taxon>
        <taxon>Bacillati</taxon>
        <taxon>Cyanobacteriota</taxon>
        <taxon>Cyanophyceae</taxon>
        <taxon>Oscillatoriophycideae</taxon>
        <taxon>Chroococcales</taxon>
        <taxon>Geminocystaceae</taxon>
        <taxon>Picosynechococcus</taxon>
    </lineage>
</organism>
<reference key="1">
    <citation type="submission" date="2008-02" db="EMBL/GenBank/DDBJ databases">
        <title>Complete sequence of Synechococcus sp. PCC 7002.</title>
        <authorList>
            <person name="Li T."/>
            <person name="Zhao J."/>
            <person name="Zhao C."/>
            <person name="Liu Z."/>
            <person name="Zhao F."/>
            <person name="Marquardt J."/>
            <person name="Nomura C.T."/>
            <person name="Persson S."/>
            <person name="Detter J.C."/>
            <person name="Richardson P.M."/>
            <person name="Lanz C."/>
            <person name="Schuster S.C."/>
            <person name="Wang J."/>
            <person name="Li S."/>
            <person name="Huang X."/>
            <person name="Cai T."/>
            <person name="Yu Z."/>
            <person name="Luo J."/>
            <person name="Zhao J."/>
            <person name="Bryant D.A."/>
        </authorList>
    </citation>
    <scope>NUCLEOTIDE SEQUENCE [LARGE SCALE GENOMIC DNA]</scope>
    <source>
        <strain>ATCC 27264 / PCC 7002 / PR-6</strain>
    </source>
</reference>
<accession>B1XJ13</accession>
<dbReference type="EMBL" id="CP000951">
    <property type="protein sequence ID" value="ACA98955.1"/>
    <property type="molecule type" value="Genomic_DNA"/>
</dbReference>
<dbReference type="RefSeq" id="WP_012306579.1">
    <property type="nucleotide sequence ID" value="NZ_JAHHPU010000001.1"/>
</dbReference>
<dbReference type="SMR" id="B1XJ13"/>
<dbReference type="STRING" id="32049.SYNPCC7002_A0952"/>
<dbReference type="KEGG" id="syp:SYNPCC7002_A0952"/>
<dbReference type="eggNOG" id="COG0233">
    <property type="taxonomic scope" value="Bacteria"/>
</dbReference>
<dbReference type="HOGENOM" id="CLU_073981_2_0_3"/>
<dbReference type="Proteomes" id="UP000001688">
    <property type="component" value="Chromosome"/>
</dbReference>
<dbReference type="GO" id="GO:0005737">
    <property type="term" value="C:cytoplasm"/>
    <property type="evidence" value="ECO:0007669"/>
    <property type="project" value="UniProtKB-SubCell"/>
</dbReference>
<dbReference type="GO" id="GO:0043023">
    <property type="term" value="F:ribosomal large subunit binding"/>
    <property type="evidence" value="ECO:0007669"/>
    <property type="project" value="TreeGrafter"/>
</dbReference>
<dbReference type="GO" id="GO:0006415">
    <property type="term" value="P:translational termination"/>
    <property type="evidence" value="ECO:0007669"/>
    <property type="project" value="UniProtKB-UniRule"/>
</dbReference>
<dbReference type="CDD" id="cd00520">
    <property type="entry name" value="RRF"/>
    <property type="match status" value="1"/>
</dbReference>
<dbReference type="FunFam" id="1.10.132.20:FF:000001">
    <property type="entry name" value="Ribosome-recycling factor"/>
    <property type="match status" value="1"/>
</dbReference>
<dbReference type="FunFam" id="3.30.1360.40:FF:000001">
    <property type="entry name" value="Ribosome-recycling factor"/>
    <property type="match status" value="1"/>
</dbReference>
<dbReference type="Gene3D" id="3.30.1360.40">
    <property type="match status" value="1"/>
</dbReference>
<dbReference type="Gene3D" id="1.10.132.20">
    <property type="entry name" value="Ribosome-recycling factor"/>
    <property type="match status" value="1"/>
</dbReference>
<dbReference type="HAMAP" id="MF_00040">
    <property type="entry name" value="RRF"/>
    <property type="match status" value="1"/>
</dbReference>
<dbReference type="InterPro" id="IPR002661">
    <property type="entry name" value="Ribosome_recyc_fac"/>
</dbReference>
<dbReference type="InterPro" id="IPR023584">
    <property type="entry name" value="Ribosome_recyc_fac_dom"/>
</dbReference>
<dbReference type="InterPro" id="IPR036191">
    <property type="entry name" value="RRF_sf"/>
</dbReference>
<dbReference type="NCBIfam" id="TIGR00496">
    <property type="entry name" value="frr"/>
    <property type="match status" value="1"/>
</dbReference>
<dbReference type="PANTHER" id="PTHR20982:SF3">
    <property type="entry name" value="MITOCHONDRIAL RIBOSOME RECYCLING FACTOR PSEUDO 1"/>
    <property type="match status" value="1"/>
</dbReference>
<dbReference type="PANTHER" id="PTHR20982">
    <property type="entry name" value="RIBOSOME RECYCLING FACTOR"/>
    <property type="match status" value="1"/>
</dbReference>
<dbReference type="Pfam" id="PF01765">
    <property type="entry name" value="RRF"/>
    <property type="match status" value="1"/>
</dbReference>
<dbReference type="SUPFAM" id="SSF55194">
    <property type="entry name" value="Ribosome recycling factor, RRF"/>
    <property type="match status" value="1"/>
</dbReference>
<feature type="chain" id="PRO_1000090795" description="Ribosome-recycling factor">
    <location>
        <begin position="1"/>
        <end position="182"/>
    </location>
</feature>
<name>RRF_PICP2</name>
<protein>
    <recommendedName>
        <fullName evidence="1">Ribosome-recycling factor</fullName>
        <shortName evidence="1">RRF</shortName>
    </recommendedName>
    <alternativeName>
        <fullName evidence="1">Ribosome-releasing factor</fullName>
    </alternativeName>
</protein>
<comment type="function">
    <text evidence="1">Responsible for the release of ribosomes from messenger RNA at the termination of protein biosynthesis. May increase the efficiency of translation by recycling ribosomes from one round of translation to another.</text>
</comment>
<comment type="subcellular location">
    <subcellularLocation>
        <location evidence="1">Cytoplasm</location>
    </subcellularLocation>
</comment>
<comment type="similarity">
    <text evidence="1">Belongs to the RRF family.</text>
</comment>
<proteinExistence type="inferred from homology"/>
<evidence type="ECO:0000255" key="1">
    <source>
        <dbReference type="HAMAP-Rule" id="MF_00040"/>
    </source>
</evidence>
<sequence length="182" mass="20501">MQLSELRENMQKTIEATQRSFNTLRTGRASASLLDRITVEYYGAETPLKSLASISTPDSSTIMIQPFDRGSLSDVERAISMSDLGLTPNNDGTNIRLNIPPLTKERRQELVKTAGKLAEEGKVALRNIRRDAIDDVRKQEKNSDISEDESRSLQDDIQKVTDEFTTKIDDLLKIKEKDIMTV</sequence>
<gene>
    <name evidence="1" type="primary">frr</name>
    <name type="ordered locus">SYNPCC7002_A0952</name>
</gene>
<keyword id="KW-0963">Cytoplasm</keyword>
<keyword id="KW-0648">Protein biosynthesis</keyword>
<keyword id="KW-1185">Reference proteome</keyword>